<reference key="1">
    <citation type="journal article" date="1977" name="Eur. J. Biochem.">
        <title>Snake venom toxins. The amino-acid sequences of three toxins (9B, 11 and 12A) from Hemachatus haemachatus (Ringhals) venom.</title>
        <authorList>
            <person name="Joubert F.J."/>
        </authorList>
    </citation>
    <scope>PROTEIN SEQUENCE</scope>
    <scope>FUNCTION</scope>
    <scope>TOXIC DOSE</scope>
    <scope>SUBCELLULAR LOCATION</scope>
    <source>
        <tissue>Venom</tissue>
    </source>
</reference>
<accession>P24777</accession>
<comment type="function">
    <text evidence="3">This protein lyses red blood cells and has cardiotoxic and hypotensive activities.</text>
</comment>
<comment type="subcellular location">
    <subcellularLocation>
        <location evidence="2">Secreted</location>
    </subcellularLocation>
</comment>
<comment type="tissue specificity">
    <text evidence="4">Expressed by the venom gland.</text>
</comment>
<comment type="toxic dose">
    <text evidence="2">LD(50) is 2.5 mg/kg by intravenous injection into mice.</text>
</comment>
<comment type="miscellaneous">
    <text evidence="4">Is classified as a P-type cytotoxin, since a proline residue stands at position 31 (Pro-31 in standard classification).</text>
</comment>
<comment type="similarity">
    <text evidence="4">Belongs to the three-finger toxin family. Short-chain subfamily. Type IB cytotoxin sub-subfamily.</text>
</comment>
<name>3SB3_HEMHA</name>
<keyword id="KW-0123">Cardiotoxin</keyword>
<keyword id="KW-0204">Cytolysis</keyword>
<keyword id="KW-0903">Direct protein sequencing</keyword>
<keyword id="KW-1015">Disulfide bond</keyword>
<keyword id="KW-0354">Hemolysis</keyword>
<keyword id="KW-0382">Hypotensive agent</keyword>
<keyword id="KW-0964">Secreted</keyword>
<keyword id="KW-0800">Toxin</keyword>
<sequence length="61" mass="6793">LKCHNKLVPFLSKTCPDGKNLCYKMSMEVTPMIPIKRGCTDTCPKSSLLVKVVCCKTDKCN</sequence>
<dbReference type="SMR" id="P24777"/>
<dbReference type="GO" id="GO:0005576">
    <property type="term" value="C:extracellular region"/>
    <property type="evidence" value="ECO:0007669"/>
    <property type="project" value="UniProtKB-SubCell"/>
</dbReference>
<dbReference type="GO" id="GO:0090729">
    <property type="term" value="F:toxin activity"/>
    <property type="evidence" value="ECO:0007669"/>
    <property type="project" value="UniProtKB-KW"/>
</dbReference>
<dbReference type="GO" id="GO:0031640">
    <property type="term" value="P:killing of cells of another organism"/>
    <property type="evidence" value="ECO:0007669"/>
    <property type="project" value="UniProtKB-KW"/>
</dbReference>
<dbReference type="GO" id="GO:0008217">
    <property type="term" value="P:regulation of blood pressure"/>
    <property type="evidence" value="ECO:0007669"/>
    <property type="project" value="UniProtKB-KW"/>
</dbReference>
<dbReference type="CDD" id="cd00206">
    <property type="entry name" value="TFP_snake_toxin"/>
    <property type="match status" value="1"/>
</dbReference>
<dbReference type="FunFam" id="2.10.60.10:FF:000024">
    <property type="entry name" value="Cytotoxin 1"/>
    <property type="match status" value="1"/>
</dbReference>
<dbReference type="Gene3D" id="2.10.60.10">
    <property type="entry name" value="CD59"/>
    <property type="match status" value="1"/>
</dbReference>
<dbReference type="InterPro" id="IPR003572">
    <property type="entry name" value="Cytotoxin_Cobra"/>
</dbReference>
<dbReference type="InterPro" id="IPR003571">
    <property type="entry name" value="Snake_3FTx"/>
</dbReference>
<dbReference type="InterPro" id="IPR045860">
    <property type="entry name" value="Snake_toxin-like_sf"/>
</dbReference>
<dbReference type="InterPro" id="IPR018354">
    <property type="entry name" value="Snake_toxin_con_site"/>
</dbReference>
<dbReference type="InterPro" id="IPR054131">
    <property type="entry name" value="Toxin_cobra-type"/>
</dbReference>
<dbReference type="Pfam" id="PF21947">
    <property type="entry name" value="Toxin_cobra-type"/>
    <property type="match status" value="1"/>
</dbReference>
<dbReference type="PRINTS" id="PR00282">
    <property type="entry name" value="CYTOTOXIN"/>
</dbReference>
<dbReference type="SUPFAM" id="SSF57302">
    <property type="entry name" value="Snake toxin-like"/>
    <property type="match status" value="1"/>
</dbReference>
<dbReference type="PROSITE" id="PS00272">
    <property type="entry name" value="SNAKE_TOXIN"/>
    <property type="match status" value="1"/>
</dbReference>
<evidence type="ECO:0000250" key="1">
    <source>
        <dbReference type="UniProtKB" id="P60301"/>
    </source>
</evidence>
<evidence type="ECO:0000269" key="2">
    <source>
    </source>
</evidence>
<evidence type="ECO:0000303" key="3">
    <source>
    </source>
</evidence>
<evidence type="ECO:0000305" key="4"/>
<protein>
    <recommendedName>
        <fullName>Cytotoxin 3</fullName>
    </recommendedName>
    <alternativeName>
        <fullName evidence="3">Toxin 11/11A</fullName>
    </alternativeName>
</protein>
<organism>
    <name type="scientific">Hemachatus haemachatus</name>
    <name type="common">Rinkhals</name>
    <name type="synonym">Sepedon haemachatus</name>
    <dbReference type="NCBI Taxonomy" id="8626"/>
    <lineage>
        <taxon>Eukaryota</taxon>
        <taxon>Metazoa</taxon>
        <taxon>Chordata</taxon>
        <taxon>Craniata</taxon>
        <taxon>Vertebrata</taxon>
        <taxon>Euteleostomi</taxon>
        <taxon>Lepidosauria</taxon>
        <taxon>Squamata</taxon>
        <taxon>Bifurcata</taxon>
        <taxon>Unidentata</taxon>
        <taxon>Episquamata</taxon>
        <taxon>Toxicofera</taxon>
        <taxon>Serpentes</taxon>
        <taxon>Colubroidea</taxon>
        <taxon>Elapidae</taxon>
        <taxon>Elapinae</taxon>
        <taxon>Hemachatus</taxon>
    </lineage>
</organism>
<proteinExistence type="evidence at protein level"/>
<feature type="chain" id="PRO_0000093478" description="Cytotoxin 3" evidence="2">
    <location>
        <begin position="1"/>
        <end position="61"/>
    </location>
</feature>
<feature type="disulfide bond" evidence="1">
    <location>
        <begin position="3"/>
        <end position="22"/>
    </location>
</feature>
<feature type="disulfide bond" evidence="1">
    <location>
        <begin position="15"/>
        <end position="39"/>
    </location>
</feature>
<feature type="disulfide bond" evidence="1">
    <location>
        <begin position="43"/>
        <end position="54"/>
    </location>
</feature>
<feature type="disulfide bond" evidence="1">
    <location>
        <begin position="55"/>
        <end position="60"/>
    </location>
</feature>
<feature type="sequence variant" description="In toxin 11A.">
    <original>F</original>
    <variation>Y</variation>
    <location>
        <position position="10"/>
    </location>
</feature>